<organism>
    <name type="scientific">Albidiferax ferrireducens (strain ATCC BAA-621 / DSM 15236 / T118)</name>
    <name type="common">Rhodoferax ferrireducens</name>
    <dbReference type="NCBI Taxonomy" id="338969"/>
    <lineage>
        <taxon>Bacteria</taxon>
        <taxon>Pseudomonadati</taxon>
        <taxon>Pseudomonadota</taxon>
        <taxon>Betaproteobacteria</taxon>
        <taxon>Burkholderiales</taxon>
        <taxon>Comamonadaceae</taxon>
        <taxon>Rhodoferax</taxon>
    </lineage>
</organism>
<evidence type="ECO:0000255" key="1">
    <source>
        <dbReference type="HAMAP-Rule" id="MF_00181"/>
    </source>
</evidence>
<sequence>MNFELETLDLNGAAKEKCDALIVLLATSFKPGKDNLSILVAQALKAGDLESQSGKALVLYRPTGLACARAVLANVGEGSANEVSKAVKAAVLAVKAGNVKKLVICFAALPQEAPLRAAVTAAAEASYVFTTTKSKPEGRVIQRVVVAVSNSSGFKPVFDRAVAAVTGIEFAKEWANRPANHATPALLAGAARSLAKLANIKCEVLGPKQVERLGMGAFMAVAQGSEEPLRFIVLRYDGAQKSAAPTVLLGKGITFDSGGISIKPAADMDEMKFDMSGAASVLGVFLALAQLKPAINVIGLIPSCENLLDGRSVKPGDVVTSMSGQTIEILNTDAEGRLVLCDALTYAERFKPRAVVDIATLTGACVIALGGVRSGLFSADDQLAAALVSAGESSLDLCWRLPLDDDYAEGLKTSFADVANVAGRAGGAITAAKFLQRFAGKFPWAHLDIAGTAWKSGTAKGATGRPVALLLEYLLTSAK</sequence>
<dbReference type="EC" id="3.4.11.1" evidence="1"/>
<dbReference type="EC" id="3.4.11.10" evidence="1"/>
<dbReference type="EMBL" id="CP000267">
    <property type="protein sequence ID" value="ABD69840.1"/>
    <property type="molecule type" value="Genomic_DNA"/>
</dbReference>
<dbReference type="RefSeq" id="WP_011464408.1">
    <property type="nucleotide sequence ID" value="NC_007908.1"/>
</dbReference>
<dbReference type="SMR" id="Q21WL3"/>
<dbReference type="STRING" id="338969.Rfer_2116"/>
<dbReference type="MEROPS" id="M17.003"/>
<dbReference type="KEGG" id="rfr:Rfer_2116"/>
<dbReference type="eggNOG" id="COG0260">
    <property type="taxonomic scope" value="Bacteria"/>
</dbReference>
<dbReference type="HOGENOM" id="CLU_013734_0_1_4"/>
<dbReference type="OrthoDB" id="9809354at2"/>
<dbReference type="Proteomes" id="UP000008332">
    <property type="component" value="Chromosome"/>
</dbReference>
<dbReference type="GO" id="GO:0005737">
    <property type="term" value="C:cytoplasm"/>
    <property type="evidence" value="ECO:0007669"/>
    <property type="project" value="UniProtKB-SubCell"/>
</dbReference>
<dbReference type="GO" id="GO:0030145">
    <property type="term" value="F:manganese ion binding"/>
    <property type="evidence" value="ECO:0007669"/>
    <property type="project" value="UniProtKB-UniRule"/>
</dbReference>
<dbReference type="GO" id="GO:0070006">
    <property type="term" value="F:metalloaminopeptidase activity"/>
    <property type="evidence" value="ECO:0007669"/>
    <property type="project" value="InterPro"/>
</dbReference>
<dbReference type="GO" id="GO:0006508">
    <property type="term" value="P:proteolysis"/>
    <property type="evidence" value="ECO:0007669"/>
    <property type="project" value="UniProtKB-KW"/>
</dbReference>
<dbReference type="CDD" id="cd00433">
    <property type="entry name" value="Peptidase_M17"/>
    <property type="match status" value="1"/>
</dbReference>
<dbReference type="Gene3D" id="3.40.220.10">
    <property type="entry name" value="Leucine Aminopeptidase, subunit E, domain 1"/>
    <property type="match status" value="1"/>
</dbReference>
<dbReference type="Gene3D" id="3.40.630.10">
    <property type="entry name" value="Zn peptidases"/>
    <property type="match status" value="1"/>
</dbReference>
<dbReference type="HAMAP" id="MF_00181">
    <property type="entry name" value="Cytosol_peptidase_M17"/>
    <property type="match status" value="1"/>
</dbReference>
<dbReference type="InterPro" id="IPR011356">
    <property type="entry name" value="Leucine_aapep/pepB"/>
</dbReference>
<dbReference type="InterPro" id="IPR043472">
    <property type="entry name" value="Macro_dom-like"/>
</dbReference>
<dbReference type="InterPro" id="IPR000819">
    <property type="entry name" value="Peptidase_M17_C"/>
</dbReference>
<dbReference type="InterPro" id="IPR023042">
    <property type="entry name" value="Peptidase_M17_leu_NH2_pept"/>
</dbReference>
<dbReference type="InterPro" id="IPR008283">
    <property type="entry name" value="Peptidase_M17_N"/>
</dbReference>
<dbReference type="NCBIfam" id="NF002074">
    <property type="entry name" value="PRK00913.1-4"/>
    <property type="match status" value="1"/>
</dbReference>
<dbReference type="PANTHER" id="PTHR11963:SF23">
    <property type="entry name" value="CYTOSOL AMINOPEPTIDASE"/>
    <property type="match status" value="1"/>
</dbReference>
<dbReference type="PANTHER" id="PTHR11963">
    <property type="entry name" value="LEUCINE AMINOPEPTIDASE-RELATED"/>
    <property type="match status" value="1"/>
</dbReference>
<dbReference type="Pfam" id="PF00883">
    <property type="entry name" value="Peptidase_M17"/>
    <property type="match status" value="1"/>
</dbReference>
<dbReference type="Pfam" id="PF02789">
    <property type="entry name" value="Peptidase_M17_N"/>
    <property type="match status" value="1"/>
</dbReference>
<dbReference type="PRINTS" id="PR00481">
    <property type="entry name" value="LAMNOPPTDASE"/>
</dbReference>
<dbReference type="SUPFAM" id="SSF52949">
    <property type="entry name" value="Macro domain-like"/>
    <property type="match status" value="1"/>
</dbReference>
<dbReference type="SUPFAM" id="SSF53187">
    <property type="entry name" value="Zn-dependent exopeptidases"/>
    <property type="match status" value="1"/>
</dbReference>
<dbReference type="PROSITE" id="PS00631">
    <property type="entry name" value="CYTOSOL_AP"/>
    <property type="match status" value="1"/>
</dbReference>
<gene>
    <name evidence="1" type="primary">pepA</name>
    <name type="ordered locus">Rfer_2116</name>
</gene>
<feature type="chain" id="PRO_1000118463" description="Probable cytosol aminopeptidase">
    <location>
        <begin position="1"/>
        <end position="479"/>
    </location>
</feature>
<feature type="active site" evidence="1">
    <location>
        <position position="263"/>
    </location>
</feature>
<feature type="active site" evidence="1">
    <location>
        <position position="337"/>
    </location>
</feature>
<feature type="binding site" evidence="1">
    <location>
        <position position="251"/>
    </location>
    <ligand>
        <name>Mn(2+)</name>
        <dbReference type="ChEBI" id="CHEBI:29035"/>
        <label>2</label>
    </ligand>
</feature>
<feature type="binding site" evidence="1">
    <location>
        <position position="256"/>
    </location>
    <ligand>
        <name>Mn(2+)</name>
        <dbReference type="ChEBI" id="CHEBI:29035"/>
        <label>1</label>
    </ligand>
</feature>
<feature type="binding site" evidence="1">
    <location>
        <position position="256"/>
    </location>
    <ligand>
        <name>Mn(2+)</name>
        <dbReference type="ChEBI" id="CHEBI:29035"/>
        <label>2</label>
    </ligand>
</feature>
<feature type="binding site" evidence="1">
    <location>
        <position position="274"/>
    </location>
    <ligand>
        <name>Mn(2+)</name>
        <dbReference type="ChEBI" id="CHEBI:29035"/>
        <label>2</label>
    </ligand>
</feature>
<feature type="binding site" evidence="1">
    <location>
        <position position="333"/>
    </location>
    <ligand>
        <name>Mn(2+)</name>
        <dbReference type="ChEBI" id="CHEBI:29035"/>
        <label>1</label>
    </ligand>
</feature>
<feature type="binding site" evidence="1">
    <location>
        <position position="335"/>
    </location>
    <ligand>
        <name>Mn(2+)</name>
        <dbReference type="ChEBI" id="CHEBI:29035"/>
        <label>1</label>
    </ligand>
</feature>
<feature type="binding site" evidence="1">
    <location>
        <position position="335"/>
    </location>
    <ligand>
        <name>Mn(2+)</name>
        <dbReference type="ChEBI" id="CHEBI:29035"/>
        <label>2</label>
    </ligand>
</feature>
<reference key="1">
    <citation type="submission" date="2006-02" db="EMBL/GenBank/DDBJ databases">
        <title>Complete sequence of chromosome of Rhodoferax ferrireducens DSM 15236.</title>
        <authorList>
            <person name="Copeland A."/>
            <person name="Lucas S."/>
            <person name="Lapidus A."/>
            <person name="Barry K."/>
            <person name="Detter J.C."/>
            <person name="Glavina del Rio T."/>
            <person name="Hammon N."/>
            <person name="Israni S."/>
            <person name="Pitluck S."/>
            <person name="Brettin T."/>
            <person name="Bruce D."/>
            <person name="Han C."/>
            <person name="Tapia R."/>
            <person name="Gilna P."/>
            <person name="Kiss H."/>
            <person name="Schmutz J."/>
            <person name="Larimer F."/>
            <person name="Land M."/>
            <person name="Kyrpides N."/>
            <person name="Ivanova N."/>
            <person name="Richardson P."/>
        </authorList>
    </citation>
    <scope>NUCLEOTIDE SEQUENCE [LARGE SCALE GENOMIC DNA]</scope>
    <source>
        <strain>ATCC BAA-621 / DSM 15236 / T118</strain>
    </source>
</reference>
<proteinExistence type="inferred from homology"/>
<accession>Q21WL3</accession>
<keyword id="KW-0031">Aminopeptidase</keyword>
<keyword id="KW-0963">Cytoplasm</keyword>
<keyword id="KW-0378">Hydrolase</keyword>
<keyword id="KW-0464">Manganese</keyword>
<keyword id="KW-0479">Metal-binding</keyword>
<keyword id="KW-0645">Protease</keyword>
<keyword id="KW-1185">Reference proteome</keyword>
<name>AMPA_ALBFT</name>
<comment type="function">
    <text evidence="1">Presumably involved in the processing and regular turnover of intracellular proteins. Catalyzes the removal of unsubstituted N-terminal amino acids from various peptides.</text>
</comment>
<comment type="catalytic activity">
    <reaction evidence="1">
        <text>Release of an N-terminal amino acid, Xaa-|-Yaa-, in which Xaa is preferably Leu, but may be other amino acids including Pro although not Arg or Lys, and Yaa may be Pro. Amino acid amides and methyl esters are also readily hydrolyzed, but rates on arylamides are exceedingly low.</text>
        <dbReference type="EC" id="3.4.11.1"/>
    </reaction>
</comment>
<comment type="catalytic activity">
    <reaction evidence="1">
        <text>Release of an N-terminal amino acid, preferentially leucine, but not glutamic or aspartic acids.</text>
        <dbReference type="EC" id="3.4.11.10"/>
    </reaction>
</comment>
<comment type="cofactor">
    <cofactor evidence="1">
        <name>Mn(2+)</name>
        <dbReference type="ChEBI" id="CHEBI:29035"/>
    </cofactor>
    <text evidence="1">Binds 2 manganese ions per subunit.</text>
</comment>
<comment type="subcellular location">
    <subcellularLocation>
        <location evidence="1">Cytoplasm</location>
    </subcellularLocation>
</comment>
<comment type="similarity">
    <text evidence="1">Belongs to the peptidase M17 family.</text>
</comment>
<protein>
    <recommendedName>
        <fullName evidence="1">Probable cytosol aminopeptidase</fullName>
        <ecNumber evidence="1">3.4.11.1</ecNumber>
    </recommendedName>
    <alternativeName>
        <fullName evidence="1">Leucine aminopeptidase</fullName>
        <shortName evidence="1">LAP</shortName>
        <ecNumber evidence="1">3.4.11.10</ecNumber>
    </alternativeName>
    <alternativeName>
        <fullName evidence="1">Leucyl aminopeptidase</fullName>
    </alternativeName>
</protein>